<feature type="transit peptide" description="Mitochondrion" evidence="2">
    <location>
        <begin position="1"/>
        <end position="63"/>
    </location>
</feature>
<feature type="chain" id="PRO_0000402324" description="Elongation factor Ts, mitochondrial">
    <location>
        <begin position="64"/>
        <end position="395"/>
    </location>
</feature>
<comment type="function">
    <text evidence="1">Associates with the EF-Tu.GDP complex and induces the exchange of GDP to GTP. It remains bound to the aminoacyl-tRNA.EF-Tu.GTP complex up to the GTP hydrolysis stage on the ribosome.</text>
</comment>
<comment type="subcellular location">
    <subcellularLocation>
        <location evidence="4">Mitochondrion</location>
    </subcellularLocation>
</comment>
<comment type="similarity">
    <text evidence="1">Belongs to the EF-Ts family.</text>
</comment>
<comment type="sequence caution" evidence="3">
    <conflict type="erroneous gene model prediction">
        <sequence resource="EMBL-CDS" id="AAC35534"/>
    </conflict>
</comment>
<comment type="sequence caution" evidence="3">
    <conflict type="erroneous gene model prediction">
        <sequence resource="EMBL-CDS" id="CAB43047"/>
    </conflict>
</comment>
<comment type="sequence caution" evidence="3">
    <conflict type="erroneous gene model prediction">
        <sequence resource="EMBL-CDS" id="CAB81213"/>
    </conflict>
</comment>
<proteinExistence type="evidence at protein level"/>
<protein>
    <recommendedName>
        <fullName evidence="1">Elongation factor Ts, mitochondrial</fullName>
        <shortName evidence="1">EF-Ts</shortName>
        <shortName evidence="1">EF-TsMt</shortName>
    </recommendedName>
</protein>
<gene>
    <name evidence="1" type="primary">EFTS</name>
    <name type="ordered locus">At4g11120</name>
    <name type="ORF">F2P3.12</name>
</gene>
<organism>
    <name type="scientific">Arabidopsis thaliana</name>
    <name type="common">Mouse-ear cress</name>
    <dbReference type="NCBI Taxonomy" id="3702"/>
    <lineage>
        <taxon>Eukaryota</taxon>
        <taxon>Viridiplantae</taxon>
        <taxon>Streptophyta</taxon>
        <taxon>Embryophyta</taxon>
        <taxon>Tracheophyta</taxon>
        <taxon>Spermatophyta</taxon>
        <taxon>Magnoliopsida</taxon>
        <taxon>eudicotyledons</taxon>
        <taxon>Gunneridae</taxon>
        <taxon>Pentapetalae</taxon>
        <taxon>rosids</taxon>
        <taxon>malvids</taxon>
        <taxon>Brassicales</taxon>
        <taxon>Brassicaceae</taxon>
        <taxon>Camelineae</taxon>
        <taxon>Arabidopsis</taxon>
    </lineage>
</organism>
<keyword id="KW-0251">Elongation factor</keyword>
<keyword id="KW-0496">Mitochondrion</keyword>
<keyword id="KW-0648">Protein biosynthesis</keyword>
<keyword id="KW-1185">Reference proteome</keyword>
<keyword id="KW-0809">Transit peptide</keyword>
<accession>Q5XF75</accession>
<accession>O82505</accession>
<accession>Q9T015</accession>
<name>EFTS_ARATH</name>
<dbReference type="EMBL" id="AF080120">
    <property type="protein sequence ID" value="AAC35534.1"/>
    <property type="status" value="ALT_SEQ"/>
    <property type="molecule type" value="Genomic_DNA"/>
</dbReference>
<dbReference type="EMBL" id="AL049876">
    <property type="protein sequence ID" value="CAB43047.1"/>
    <property type="status" value="ALT_SEQ"/>
    <property type="molecule type" value="Genomic_DNA"/>
</dbReference>
<dbReference type="EMBL" id="AL161531">
    <property type="protein sequence ID" value="CAB81213.1"/>
    <property type="status" value="ALT_SEQ"/>
    <property type="molecule type" value="Genomic_DNA"/>
</dbReference>
<dbReference type="EMBL" id="CP002687">
    <property type="protein sequence ID" value="AEE82975.1"/>
    <property type="molecule type" value="Genomic_DNA"/>
</dbReference>
<dbReference type="EMBL" id="BT015741">
    <property type="protein sequence ID" value="AAU84678.1"/>
    <property type="molecule type" value="mRNA"/>
</dbReference>
<dbReference type="EMBL" id="BT020174">
    <property type="protein sequence ID" value="AAV43776.1"/>
    <property type="molecule type" value="mRNA"/>
</dbReference>
<dbReference type="PIR" id="T08191">
    <property type="entry name" value="T08191"/>
</dbReference>
<dbReference type="RefSeq" id="NP_192850.2">
    <property type="nucleotide sequence ID" value="NM_117182.5"/>
</dbReference>
<dbReference type="SMR" id="Q5XF75"/>
<dbReference type="BioGRID" id="12012">
    <property type="interactions" value="4"/>
</dbReference>
<dbReference type="FunCoup" id="Q5XF75">
    <property type="interactions" value="3617"/>
</dbReference>
<dbReference type="IntAct" id="Q5XF75">
    <property type="interactions" value="1"/>
</dbReference>
<dbReference type="STRING" id="3702.Q5XF75"/>
<dbReference type="iPTMnet" id="Q5XF75"/>
<dbReference type="PaxDb" id="3702-AT4G11120.1"/>
<dbReference type="ProteomicsDB" id="220739"/>
<dbReference type="EnsemblPlants" id="AT4G11120.1">
    <property type="protein sequence ID" value="AT4G11120.1"/>
    <property type="gene ID" value="AT4G11120"/>
</dbReference>
<dbReference type="GeneID" id="826713"/>
<dbReference type="Gramene" id="AT4G11120.1">
    <property type="protein sequence ID" value="AT4G11120.1"/>
    <property type="gene ID" value="AT4G11120"/>
</dbReference>
<dbReference type="KEGG" id="ath:AT4G11120"/>
<dbReference type="Araport" id="AT4G11120"/>
<dbReference type="TAIR" id="AT4G11120"/>
<dbReference type="eggNOG" id="KOG1071">
    <property type="taxonomic scope" value="Eukaryota"/>
</dbReference>
<dbReference type="HOGENOM" id="CLU_047155_2_1_1"/>
<dbReference type="InParanoid" id="Q5XF75"/>
<dbReference type="OMA" id="QEYMLDD"/>
<dbReference type="PhylomeDB" id="Q5XF75"/>
<dbReference type="CD-CODE" id="4299E36E">
    <property type="entry name" value="Nucleolus"/>
</dbReference>
<dbReference type="PRO" id="PR:Q5XF75"/>
<dbReference type="Proteomes" id="UP000006548">
    <property type="component" value="Chromosome 4"/>
</dbReference>
<dbReference type="ExpressionAtlas" id="Q5XF75">
    <property type="expression patterns" value="baseline and differential"/>
</dbReference>
<dbReference type="GO" id="GO:0005739">
    <property type="term" value="C:mitochondrion"/>
    <property type="evidence" value="ECO:0007005"/>
    <property type="project" value="TAIR"/>
</dbReference>
<dbReference type="GO" id="GO:0003746">
    <property type="term" value="F:translation elongation factor activity"/>
    <property type="evidence" value="ECO:0007669"/>
    <property type="project" value="UniProtKB-UniRule"/>
</dbReference>
<dbReference type="CDD" id="cd14275">
    <property type="entry name" value="UBA_EF-Ts"/>
    <property type="match status" value="1"/>
</dbReference>
<dbReference type="FunFam" id="1.10.286.20:FF:000001">
    <property type="entry name" value="Elongation factor Ts"/>
    <property type="match status" value="1"/>
</dbReference>
<dbReference type="FunFam" id="1.10.8.10:FF:000001">
    <property type="entry name" value="Elongation factor Ts"/>
    <property type="match status" value="1"/>
</dbReference>
<dbReference type="FunFam" id="3.30.479.20:FF:000012">
    <property type="entry name" value="Elongation factor Ts, mitochondrial"/>
    <property type="match status" value="1"/>
</dbReference>
<dbReference type="Gene3D" id="1.10.286.20">
    <property type="match status" value="1"/>
</dbReference>
<dbReference type="Gene3D" id="1.10.8.10">
    <property type="entry name" value="DNA helicase RuvA subunit, C-terminal domain"/>
    <property type="match status" value="1"/>
</dbReference>
<dbReference type="Gene3D" id="3.30.479.20">
    <property type="entry name" value="Elongation factor Ts, dimerisation domain"/>
    <property type="match status" value="2"/>
</dbReference>
<dbReference type="HAMAP" id="MF_00050">
    <property type="entry name" value="EF_Ts"/>
    <property type="match status" value="1"/>
</dbReference>
<dbReference type="InterPro" id="IPR036402">
    <property type="entry name" value="EF-Ts_dimer_sf"/>
</dbReference>
<dbReference type="InterPro" id="IPR001816">
    <property type="entry name" value="Transl_elong_EFTs/EF1B"/>
</dbReference>
<dbReference type="InterPro" id="IPR014039">
    <property type="entry name" value="Transl_elong_EFTs/EF1B_dimer"/>
</dbReference>
<dbReference type="InterPro" id="IPR018101">
    <property type="entry name" value="Transl_elong_Ts_CS"/>
</dbReference>
<dbReference type="InterPro" id="IPR009060">
    <property type="entry name" value="UBA-like_sf"/>
</dbReference>
<dbReference type="NCBIfam" id="TIGR00116">
    <property type="entry name" value="tsf"/>
    <property type="match status" value="1"/>
</dbReference>
<dbReference type="PANTHER" id="PTHR11741">
    <property type="entry name" value="ELONGATION FACTOR TS"/>
    <property type="match status" value="1"/>
</dbReference>
<dbReference type="PANTHER" id="PTHR11741:SF0">
    <property type="entry name" value="ELONGATION FACTOR TS, MITOCHONDRIAL"/>
    <property type="match status" value="1"/>
</dbReference>
<dbReference type="Pfam" id="PF00889">
    <property type="entry name" value="EF_TS"/>
    <property type="match status" value="1"/>
</dbReference>
<dbReference type="SUPFAM" id="SSF54713">
    <property type="entry name" value="Elongation factor Ts (EF-Ts), dimerisation domain"/>
    <property type="match status" value="2"/>
</dbReference>
<dbReference type="SUPFAM" id="SSF46934">
    <property type="entry name" value="UBA-like"/>
    <property type="match status" value="1"/>
</dbReference>
<dbReference type="PROSITE" id="PS01127">
    <property type="entry name" value="EF_TS_2"/>
    <property type="match status" value="1"/>
</dbReference>
<evidence type="ECO:0000255" key="1">
    <source>
        <dbReference type="HAMAP-Rule" id="MF_03135"/>
    </source>
</evidence>
<evidence type="ECO:0000269" key="2">
    <source>
    </source>
</evidence>
<evidence type="ECO:0000305" key="3"/>
<evidence type="ECO:0000305" key="4">
    <source>
    </source>
</evidence>
<sequence>MAFARAVRRPIGVFYYSVSSRFSSGNEYSTVASKFETLSQYKSSVPSGYTSLVRGFGNFIRSFSSEAPPAVSDQMSLIKQLRERTSAPIKDVKASLVECNWDLEAAQKDLRKRGKVLASKKSSRTAAEGMLAVAQNEGKVAVIELNCETDFVARNEIFQYLALAMAKHALLVESSSQQVSGVFPFGPELFEEFKLNLDHPKVNGETTVSNAVTEVAAIMGENVKFRRGFLMSKSSAGVLSAYLHTSPQPGLGRIAGIVSLEVEGENTQLEAIQRVGSELAMHVVAAKPLFLSKDLVSSEAMANEREILKSQAESTGKNQMAIEKIVEGRLRKYFEEVALMEQKFIVNDAINIKTLVDNLSKEVGSPVKVTDFLRVEVGEGIERLEASDEPVAQTA</sequence>
<reference key="1">
    <citation type="journal article" date="1999" name="Nature">
        <title>Sequence and analysis of chromosome 4 of the plant Arabidopsis thaliana.</title>
        <authorList>
            <person name="Mayer K.F.X."/>
            <person name="Schueller C."/>
            <person name="Wambutt R."/>
            <person name="Murphy G."/>
            <person name="Volckaert G."/>
            <person name="Pohl T."/>
            <person name="Duesterhoeft A."/>
            <person name="Stiekema W."/>
            <person name="Entian K.-D."/>
            <person name="Terryn N."/>
            <person name="Harris B."/>
            <person name="Ansorge W."/>
            <person name="Brandt P."/>
            <person name="Grivell L.A."/>
            <person name="Rieger M."/>
            <person name="Weichselgartner M."/>
            <person name="de Simone V."/>
            <person name="Obermaier B."/>
            <person name="Mache R."/>
            <person name="Mueller M."/>
            <person name="Kreis M."/>
            <person name="Delseny M."/>
            <person name="Puigdomenech P."/>
            <person name="Watson M."/>
            <person name="Schmidtheini T."/>
            <person name="Reichert B."/>
            <person name="Portetelle D."/>
            <person name="Perez-Alonso M."/>
            <person name="Boutry M."/>
            <person name="Bancroft I."/>
            <person name="Vos P."/>
            <person name="Hoheisel J."/>
            <person name="Zimmermann W."/>
            <person name="Wedler H."/>
            <person name="Ridley P."/>
            <person name="Langham S.-A."/>
            <person name="McCullagh B."/>
            <person name="Bilham L."/>
            <person name="Robben J."/>
            <person name="van der Schueren J."/>
            <person name="Grymonprez B."/>
            <person name="Chuang Y.-J."/>
            <person name="Vandenbussche F."/>
            <person name="Braeken M."/>
            <person name="Weltjens I."/>
            <person name="Voet M."/>
            <person name="Bastiaens I."/>
            <person name="Aert R."/>
            <person name="Defoor E."/>
            <person name="Weitzenegger T."/>
            <person name="Bothe G."/>
            <person name="Ramsperger U."/>
            <person name="Hilbert H."/>
            <person name="Braun M."/>
            <person name="Holzer E."/>
            <person name="Brandt A."/>
            <person name="Peters S."/>
            <person name="van Staveren M."/>
            <person name="Dirkse W."/>
            <person name="Mooijman P."/>
            <person name="Klein Lankhorst R."/>
            <person name="Rose M."/>
            <person name="Hauf J."/>
            <person name="Koetter P."/>
            <person name="Berneiser S."/>
            <person name="Hempel S."/>
            <person name="Feldpausch M."/>
            <person name="Lamberth S."/>
            <person name="Van den Daele H."/>
            <person name="De Keyser A."/>
            <person name="Buysshaert C."/>
            <person name="Gielen J."/>
            <person name="Villarroel R."/>
            <person name="De Clercq R."/>
            <person name="van Montagu M."/>
            <person name="Rogers J."/>
            <person name="Cronin A."/>
            <person name="Quail M.A."/>
            <person name="Bray-Allen S."/>
            <person name="Clark L."/>
            <person name="Doggett J."/>
            <person name="Hall S."/>
            <person name="Kay M."/>
            <person name="Lennard N."/>
            <person name="McLay K."/>
            <person name="Mayes R."/>
            <person name="Pettett A."/>
            <person name="Rajandream M.A."/>
            <person name="Lyne M."/>
            <person name="Benes V."/>
            <person name="Rechmann S."/>
            <person name="Borkova D."/>
            <person name="Bloecker H."/>
            <person name="Scharfe M."/>
            <person name="Grimm M."/>
            <person name="Loehnert T.-H."/>
            <person name="Dose S."/>
            <person name="de Haan M."/>
            <person name="Maarse A.C."/>
            <person name="Schaefer M."/>
            <person name="Mueller-Auer S."/>
            <person name="Gabel C."/>
            <person name="Fuchs M."/>
            <person name="Fartmann B."/>
            <person name="Granderath K."/>
            <person name="Dauner D."/>
            <person name="Herzl A."/>
            <person name="Neumann S."/>
            <person name="Argiriou A."/>
            <person name="Vitale D."/>
            <person name="Liguori R."/>
            <person name="Piravandi E."/>
            <person name="Massenet O."/>
            <person name="Quigley F."/>
            <person name="Clabauld G."/>
            <person name="Muendlein A."/>
            <person name="Felber R."/>
            <person name="Schnabl S."/>
            <person name="Hiller R."/>
            <person name="Schmidt W."/>
            <person name="Lecharny A."/>
            <person name="Aubourg S."/>
            <person name="Chefdor F."/>
            <person name="Cooke R."/>
            <person name="Berger C."/>
            <person name="Monfort A."/>
            <person name="Casacuberta E."/>
            <person name="Gibbons T."/>
            <person name="Weber N."/>
            <person name="Vandenbol M."/>
            <person name="Bargues M."/>
            <person name="Terol J."/>
            <person name="Torres A."/>
            <person name="Perez-Perez A."/>
            <person name="Purnelle B."/>
            <person name="Bent E."/>
            <person name="Johnson S."/>
            <person name="Tacon D."/>
            <person name="Jesse T."/>
            <person name="Heijnen L."/>
            <person name="Schwarz S."/>
            <person name="Scholler P."/>
            <person name="Heber S."/>
            <person name="Francs P."/>
            <person name="Bielke C."/>
            <person name="Frishman D."/>
            <person name="Haase D."/>
            <person name="Lemcke K."/>
            <person name="Mewes H.-W."/>
            <person name="Stocker S."/>
            <person name="Zaccaria P."/>
            <person name="Bevan M."/>
            <person name="Wilson R.K."/>
            <person name="de la Bastide M."/>
            <person name="Habermann K."/>
            <person name="Parnell L."/>
            <person name="Dedhia N."/>
            <person name="Gnoj L."/>
            <person name="Schutz K."/>
            <person name="Huang E."/>
            <person name="Spiegel L."/>
            <person name="Sekhon M."/>
            <person name="Murray J."/>
            <person name="Sheet P."/>
            <person name="Cordes M."/>
            <person name="Abu-Threideh J."/>
            <person name="Stoneking T."/>
            <person name="Kalicki J."/>
            <person name="Graves T."/>
            <person name="Harmon G."/>
            <person name="Edwards J."/>
            <person name="Latreille P."/>
            <person name="Courtney L."/>
            <person name="Cloud J."/>
            <person name="Abbott A."/>
            <person name="Scott K."/>
            <person name="Johnson D."/>
            <person name="Minx P."/>
            <person name="Bentley D."/>
            <person name="Fulton B."/>
            <person name="Miller N."/>
            <person name="Greco T."/>
            <person name="Kemp K."/>
            <person name="Kramer J."/>
            <person name="Fulton L."/>
            <person name="Mardis E."/>
            <person name="Dante M."/>
            <person name="Pepin K."/>
            <person name="Hillier L.W."/>
            <person name="Nelson J."/>
            <person name="Spieth J."/>
            <person name="Ryan E."/>
            <person name="Andrews S."/>
            <person name="Geisel C."/>
            <person name="Layman D."/>
            <person name="Du H."/>
            <person name="Ali J."/>
            <person name="Berghoff A."/>
            <person name="Jones K."/>
            <person name="Drone K."/>
            <person name="Cotton M."/>
            <person name="Joshu C."/>
            <person name="Antonoiu B."/>
            <person name="Zidanic M."/>
            <person name="Strong C."/>
            <person name="Sun H."/>
            <person name="Lamar B."/>
            <person name="Yordan C."/>
            <person name="Ma P."/>
            <person name="Zhong J."/>
            <person name="Preston R."/>
            <person name="Vil D."/>
            <person name="Shekher M."/>
            <person name="Matero A."/>
            <person name="Shah R."/>
            <person name="Swaby I.K."/>
            <person name="O'Shaughnessy A."/>
            <person name="Rodriguez M."/>
            <person name="Hoffman J."/>
            <person name="Till S."/>
            <person name="Granat S."/>
            <person name="Shohdy N."/>
            <person name="Hasegawa A."/>
            <person name="Hameed A."/>
            <person name="Lodhi M."/>
            <person name="Johnson A."/>
            <person name="Chen E."/>
            <person name="Marra M.A."/>
            <person name="Martienssen R."/>
            <person name="McCombie W.R."/>
        </authorList>
    </citation>
    <scope>NUCLEOTIDE SEQUENCE [LARGE SCALE GENOMIC DNA]</scope>
    <source>
        <strain>cv. Columbia</strain>
    </source>
</reference>
<reference key="2">
    <citation type="journal article" date="2017" name="Plant J.">
        <title>Araport11: a complete reannotation of the Arabidopsis thaliana reference genome.</title>
        <authorList>
            <person name="Cheng C.Y."/>
            <person name="Krishnakumar V."/>
            <person name="Chan A.P."/>
            <person name="Thibaud-Nissen F."/>
            <person name="Schobel S."/>
            <person name="Town C.D."/>
        </authorList>
    </citation>
    <scope>GENOME REANNOTATION</scope>
    <source>
        <strain>cv. Columbia</strain>
    </source>
</reference>
<reference key="3">
    <citation type="submission" date="2004-11" db="EMBL/GenBank/DDBJ databases">
        <title>Arabidopsis ORF clones.</title>
        <authorList>
            <person name="Shinn P."/>
            <person name="Chen H."/>
            <person name="Cheuk R.F."/>
            <person name="Kim C.J."/>
            <person name="Ecker J.R."/>
        </authorList>
    </citation>
    <scope>NUCLEOTIDE SEQUENCE [LARGE SCALE MRNA]</scope>
    <source>
        <strain>cv. Columbia</strain>
    </source>
</reference>
<reference key="4">
    <citation type="journal article" date="2015" name="J. Exp. Bot.">
        <title>Identification of cleavage sites and substrate proteins for two mitochondrial intermediate peptidases in Arabidopsis thaliana.</title>
        <authorList>
            <person name="Carrie C."/>
            <person name="Venne A.S."/>
            <person name="Zahedi R.P."/>
            <person name="Soll J."/>
        </authorList>
    </citation>
    <scope>IDENTIFICATION BY MASS SPECTROMETRY</scope>
    <scope>CLEAVAGE OF TRANSIT PEPTIDE AFTER PHE-63</scope>
</reference>